<feature type="chain" id="PRO_1000201782" description="Dihydroxy-acid dehydratase">
    <location>
        <begin position="1"/>
        <end position="613"/>
    </location>
</feature>
<feature type="active site" description="Proton acceptor" evidence="1">
    <location>
        <position position="515"/>
    </location>
</feature>
<feature type="binding site" evidence="1">
    <location>
        <position position="81"/>
    </location>
    <ligand>
        <name>Mg(2+)</name>
        <dbReference type="ChEBI" id="CHEBI:18420"/>
    </ligand>
</feature>
<feature type="binding site" evidence="1">
    <location>
        <position position="122"/>
    </location>
    <ligand>
        <name>[2Fe-2S] cluster</name>
        <dbReference type="ChEBI" id="CHEBI:190135"/>
    </ligand>
</feature>
<feature type="binding site" evidence="1">
    <location>
        <position position="123"/>
    </location>
    <ligand>
        <name>Mg(2+)</name>
        <dbReference type="ChEBI" id="CHEBI:18420"/>
    </ligand>
</feature>
<feature type="binding site" description="via carbamate group" evidence="1">
    <location>
        <position position="124"/>
    </location>
    <ligand>
        <name>Mg(2+)</name>
        <dbReference type="ChEBI" id="CHEBI:18420"/>
    </ligand>
</feature>
<feature type="binding site" evidence="1">
    <location>
        <position position="193"/>
    </location>
    <ligand>
        <name>[2Fe-2S] cluster</name>
        <dbReference type="ChEBI" id="CHEBI:190135"/>
    </ligand>
</feature>
<feature type="binding site" evidence="1">
    <location>
        <position position="489"/>
    </location>
    <ligand>
        <name>Mg(2+)</name>
        <dbReference type="ChEBI" id="CHEBI:18420"/>
    </ligand>
</feature>
<feature type="modified residue" description="N6-carboxylysine" evidence="1">
    <location>
        <position position="124"/>
    </location>
</feature>
<name>ILVD_PSEFS</name>
<reference key="1">
    <citation type="journal article" date="2009" name="Genome Biol.">
        <title>Genomic and genetic analyses of diversity and plant interactions of Pseudomonas fluorescens.</title>
        <authorList>
            <person name="Silby M.W."/>
            <person name="Cerdeno-Tarraga A.M."/>
            <person name="Vernikos G.S."/>
            <person name="Giddens S.R."/>
            <person name="Jackson R.W."/>
            <person name="Preston G.M."/>
            <person name="Zhang X.-X."/>
            <person name="Moon C.D."/>
            <person name="Gehrig S.M."/>
            <person name="Godfrey S.A.C."/>
            <person name="Knight C.G."/>
            <person name="Malone J.G."/>
            <person name="Robinson Z."/>
            <person name="Spiers A.J."/>
            <person name="Harris S."/>
            <person name="Challis G.L."/>
            <person name="Yaxley A.M."/>
            <person name="Harris D."/>
            <person name="Seeger K."/>
            <person name="Murphy L."/>
            <person name="Rutter S."/>
            <person name="Squares R."/>
            <person name="Quail M.A."/>
            <person name="Saunders E."/>
            <person name="Mavromatis K."/>
            <person name="Brettin T.S."/>
            <person name="Bentley S.D."/>
            <person name="Hothersall J."/>
            <person name="Stephens E."/>
            <person name="Thomas C.M."/>
            <person name="Parkhill J."/>
            <person name="Levy S.B."/>
            <person name="Rainey P.B."/>
            <person name="Thomson N.R."/>
        </authorList>
    </citation>
    <scope>NUCLEOTIDE SEQUENCE [LARGE SCALE GENOMIC DNA]</scope>
    <source>
        <strain>SBW25</strain>
    </source>
</reference>
<protein>
    <recommendedName>
        <fullName evidence="1">Dihydroxy-acid dehydratase</fullName>
        <shortName evidence="1">DAD</shortName>
        <ecNumber evidence="1">4.2.1.9</ecNumber>
    </recommendedName>
</protein>
<proteinExistence type="inferred from homology"/>
<keyword id="KW-0001">2Fe-2S</keyword>
<keyword id="KW-0028">Amino-acid biosynthesis</keyword>
<keyword id="KW-0100">Branched-chain amino acid biosynthesis</keyword>
<keyword id="KW-0408">Iron</keyword>
<keyword id="KW-0411">Iron-sulfur</keyword>
<keyword id="KW-0456">Lyase</keyword>
<keyword id="KW-0460">Magnesium</keyword>
<keyword id="KW-0479">Metal-binding</keyword>
<gene>
    <name evidence="1" type="primary">ilvD</name>
    <name type="ordered locus">PFLU_5797</name>
</gene>
<sequence length="613" mass="65709">MPDYRSKTSTHGRNMAGARALWRATGMKDDDFKKPIIAIANSFTQFVPGHVHLKDLGQLVAREIERAGGVAKEFNTIAVDDGIAMGHDGMLYSLPSREIIADSVEYMVNAHCADAIVCISNCDKITPGMLMAALRLNIPVIFVSGGPMEAGKTKLASHGLDLVDAMVIAADSSASDEKVAEYERSACPTCGSCSGMFTANSMNCLVEALGLALPGNGSTLATHSDREQLFLQAGRTIVELCKRYYGENDESVLPRNIANFKAFENAMTLDIAMGGSTNTILHLLAAAQEAEIDFDLRDIDRLSRHVPQLCKVAPNIQKYHMEDVHRAGGIFSILGSLARGGLLHTDLPTVHSKSIAEGIAKWDITQTDDEAVHTFFKAGPAGIPTQTAFSQSTRWDTLDDDRENGCIRSVEHAYSQEGGLAVLYGNIALDGCVVKTAGVDESIHVFEGRAKIYESQDSSVRGILADEVKEGDIVIIRYEGPKGGPGMQEMLYPTSYLKSKGLGKACALLTDGRFSGGTSGLSIGHASPEAAAGGAIGLVQDGDKVLIDIPNRSINLLISDEELAARRVEQDKKGWKPVEKRPRKVTTALKAYALLATSADKGAVRNKAMLDGL</sequence>
<evidence type="ECO:0000255" key="1">
    <source>
        <dbReference type="HAMAP-Rule" id="MF_00012"/>
    </source>
</evidence>
<comment type="function">
    <text evidence="1">Functions in the biosynthesis of branched-chain amino acids. Catalyzes the dehydration of (2R,3R)-2,3-dihydroxy-3-methylpentanoate (2,3-dihydroxy-3-methylvalerate) into 2-oxo-3-methylpentanoate (2-oxo-3-methylvalerate) and of (2R)-2,3-dihydroxy-3-methylbutanoate (2,3-dihydroxyisovalerate) into 2-oxo-3-methylbutanoate (2-oxoisovalerate), the penultimate precursor to L-isoleucine and L-valine, respectively.</text>
</comment>
<comment type="catalytic activity">
    <reaction evidence="1">
        <text>(2R)-2,3-dihydroxy-3-methylbutanoate = 3-methyl-2-oxobutanoate + H2O</text>
        <dbReference type="Rhea" id="RHEA:24809"/>
        <dbReference type="ChEBI" id="CHEBI:11851"/>
        <dbReference type="ChEBI" id="CHEBI:15377"/>
        <dbReference type="ChEBI" id="CHEBI:49072"/>
        <dbReference type="EC" id="4.2.1.9"/>
    </reaction>
    <physiologicalReaction direction="left-to-right" evidence="1">
        <dbReference type="Rhea" id="RHEA:24810"/>
    </physiologicalReaction>
</comment>
<comment type="catalytic activity">
    <reaction evidence="1">
        <text>(2R,3R)-2,3-dihydroxy-3-methylpentanoate = (S)-3-methyl-2-oxopentanoate + H2O</text>
        <dbReference type="Rhea" id="RHEA:27694"/>
        <dbReference type="ChEBI" id="CHEBI:15377"/>
        <dbReference type="ChEBI" id="CHEBI:35146"/>
        <dbReference type="ChEBI" id="CHEBI:49258"/>
        <dbReference type="EC" id="4.2.1.9"/>
    </reaction>
    <physiologicalReaction direction="left-to-right" evidence="1">
        <dbReference type="Rhea" id="RHEA:27695"/>
    </physiologicalReaction>
</comment>
<comment type="cofactor">
    <cofactor evidence="1">
        <name>[2Fe-2S] cluster</name>
        <dbReference type="ChEBI" id="CHEBI:190135"/>
    </cofactor>
    <text evidence="1">Binds 1 [2Fe-2S] cluster per subunit. This cluster acts as a Lewis acid cofactor.</text>
</comment>
<comment type="cofactor">
    <cofactor evidence="1">
        <name>Mg(2+)</name>
        <dbReference type="ChEBI" id="CHEBI:18420"/>
    </cofactor>
</comment>
<comment type="pathway">
    <text evidence="1">Amino-acid biosynthesis; L-isoleucine biosynthesis; L-isoleucine from 2-oxobutanoate: step 3/4.</text>
</comment>
<comment type="pathway">
    <text evidence="1">Amino-acid biosynthesis; L-valine biosynthesis; L-valine from pyruvate: step 3/4.</text>
</comment>
<comment type="subunit">
    <text evidence="1">Homodimer.</text>
</comment>
<comment type="similarity">
    <text evidence="1">Belongs to the IlvD/Edd family.</text>
</comment>
<accession>C3K3P0</accession>
<dbReference type="EC" id="4.2.1.9" evidence="1"/>
<dbReference type="EMBL" id="AM181176">
    <property type="protein sequence ID" value="CAY53201.1"/>
    <property type="molecule type" value="Genomic_DNA"/>
</dbReference>
<dbReference type="RefSeq" id="WP_003195159.1">
    <property type="nucleotide sequence ID" value="NC_012660.1"/>
</dbReference>
<dbReference type="SMR" id="C3K3P0"/>
<dbReference type="STRING" id="294.SRM1_05453"/>
<dbReference type="GeneID" id="93430151"/>
<dbReference type="eggNOG" id="COG0129">
    <property type="taxonomic scope" value="Bacteria"/>
</dbReference>
<dbReference type="HOGENOM" id="CLU_014271_4_2_6"/>
<dbReference type="OrthoDB" id="9807077at2"/>
<dbReference type="UniPathway" id="UPA00047">
    <property type="reaction ID" value="UER00057"/>
</dbReference>
<dbReference type="UniPathway" id="UPA00049">
    <property type="reaction ID" value="UER00061"/>
</dbReference>
<dbReference type="GO" id="GO:0005829">
    <property type="term" value="C:cytosol"/>
    <property type="evidence" value="ECO:0007669"/>
    <property type="project" value="TreeGrafter"/>
</dbReference>
<dbReference type="GO" id="GO:0051537">
    <property type="term" value="F:2 iron, 2 sulfur cluster binding"/>
    <property type="evidence" value="ECO:0007669"/>
    <property type="project" value="UniProtKB-UniRule"/>
</dbReference>
<dbReference type="GO" id="GO:0004160">
    <property type="term" value="F:dihydroxy-acid dehydratase activity"/>
    <property type="evidence" value="ECO:0007669"/>
    <property type="project" value="UniProtKB-UniRule"/>
</dbReference>
<dbReference type="GO" id="GO:0000287">
    <property type="term" value="F:magnesium ion binding"/>
    <property type="evidence" value="ECO:0007669"/>
    <property type="project" value="UniProtKB-UniRule"/>
</dbReference>
<dbReference type="GO" id="GO:0009097">
    <property type="term" value="P:isoleucine biosynthetic process"/>
    <property type="evidence" value="ECO:0007669"/>
    <property type="project" value="UniProtKB-UniRule"/>
</dbReference>
<dbReference type="GO" id="GO:0009099">
    <property type="term" value="P:L-valine biosynthetic process"/>
    <property type="evidence" value="ECO:0007669"/>
    <property type="project" value="UniProtKB-UniRule"/>
</dbReference>
<dbReference type="FunFam" id="3.50.30.80:FF:000001">
    <property type="entry name" value="Dihydroxy-acid dehydratase"/>
    <property type="match status" value="1"/>
</dbReference>
<dbReference type="Gene3D" id="3.50.30.80">
    <property type="entry name" value="IlvD/EDD C-terminal domain-like"/>
    <property type="match status" value="1"/>
</dbReference>
<dbReference type="HAMAP" id="MF_00012">
    <property type="entry name" value="IlvD"/>
    <property type="match status" value="1"/>
</dbReference>
<dbReference type="InterPro" id="IPR042096">
    <property type="entry name" value="Dihydro-acid_dehy_C"/>
</dbReference>
<dbReference type="InterPro" id="IPR004404">
    <property type="entry name" value="DihydroxyA_deHydtase"/>
</dbReference>
<dbReference type="InterPro" id="IPR020558">
    <property type="entry name" value="DiOHA_6PGluconate_deHydtase_CS"/>
</dbReference>
<dbReference type="InterPro" id="IPR056740">
    <property type="entry name" value="ILV_EDD_C"/>
</dbReference>
<dbReference type="InterPro" id="IPR000581">
    <property type="entry name" value="ILV_EDD_N"/>
</dbReference>
<dbReference type="InterPro" id="IPR037237">
    <property type="entry name" value="IlvD/EDD_N"/>
</dbReference>
<dbReference type="NCBIfam" id="TIGR00110">
    <property type="entry name" value="ilvD"/>
    <property type="match status" value="1"/>
</dbReference>
<dbReference type="NCBIfam" id="NF009103">
    <property type="entry name" value="PRK12448.1"/>
    <property type="match status" value="1"/>
</dbReference>
<dbReference type="PANTHER" id="PTHR43661">
    <property type="entry name" value="D-XYLONATE DEHYDRATASE"/>
    <property type="match status" value="1"/>
</dbReference>
<dbReference type="PANTHER" id="PTHR43661:SF3">
    <property type="entry name" value="D-XYLONATE DEHYDRATASE YAGF-RELATED"/>
    <property type="match status" value="1"/>
</dbReference>
<dbReference type="Pfam" id="PF24877">
    <property type="entry name" value="ILV_EDD_C"/>
    <property type="match status" value="1"/>
</dbReference>
<dbReference type="Pfam" id="PF00920">
    <property type="entry name" value="ILVD_EDD_N"/>
    <property type="match status" value="1"/>
</dbReference>
<dbReference type="SUPFAM" id="SSF143975">
    <property type="entry name" value="IlvD/EDD N-terminal domain-like"/>
    <property type="match status" value="1"/>
</dbReference>
<dbReference type="SUPFAM" id="SSF52016">
    <property type="entry name" value="LeuD/IlvD-like"/>
    <property type="match status" value="1"/>
</dbReference>
<dbReference type="PROSITE" id="PS00886">
    <property type="entry name" value="ILVD_EDD_1"/>
    <property type="match status" value="1"/>
</dbReference>
<dbReference type="PROSITE" id="PS00887">
    <property type="entry name" value="ILVD_EDD_2"/>
    <property type="match status" value="1"/>
</dbReference>
<organism>
    <name type="scientific">Pseudomonas fluorescens (strain SBW25)</name>
    <dbReference type="NCBI Taxonomy" id="216595"/>
    <lineage>
        <taxon>Bacteria</taxon>
        <taxon>Pseudomonadati</taxon>
        <taxon>Pseudomonadota</taxon>
        <taxon>Gammaproteobacteria</taxon>
        <taxon>Pseudomonadales</taxon>
        <taxon>Pseudomonadaceae</taxon>
        <taxon>Pseudomonas</taxon>
    </lineage>
</organism>